<reference key="1">
    <citation type="journal article" date="2007" name="J. Virol.">
        <title>Identification of novel rodent herpesviruses, including the first gammaherpesvirus of Mus musculus.</title>
        <authorList>
            <person name="Ehlers B."/>
            <person name="Kuchler J."/>
            <person name="Yasmum N."/>
            <person name="Dural G."/>
            <person name="Voigt S."/>
            <person name="Schmidt-Chanasit J."/>
            <person name="Jakel T."/>
            <person name="Matuschka F.R."/>
            <person name="Richter D."/>
            <person name="Essbauer S."/>
            <person name="Hughes D.J."/>
            <person name="Summers C."/>
            <person name="Bennett M."/>
            <person name="Stewart J.P."/>
            <person name="Ulrich R.G."/>
        </authorList>
    </citation>
    <scope>NUCLEOTIDE SEQUENCE [GENOMIC DNA]</scope>
</reference>
<reference key="2">
    <citation type="journal article" date="2001" name="J. Gen. Virol.">
        <title>Genetic and ultrastructural characterization of a European isolate of the fatal endotheliotropic elephant herpesvirus.</title>
        <authorList>
            <person name="Ehlers B."/>
            <person name="Burkhardt S."/>
            <person name="Goltz M."/>
            <person name="Bergmann V."/>
            <person name="Ochs A."/>
            <person name="Weiler H."/>
            <person name="Hentschke J."/>
        </authorList>
    </citation>
    <scope>NUCLEOTIDE SEQUENCE [GENOMIC DNA]</scope>
</reference>
<dbReference type="EMBL" id="AF322977">
    <property type="protein sequence ID" value="ABG36583.1"/>
    <property type="molecule type" value="Genomic_DNA"/>
</dbReference>
<organism>
    <name type="scientific">Elephantid herpesvirus 1 (isolate Asian elephant/Berlin/Kiba/1998)</name>
    <name type="common">EIHV-1</name>
    <name type="synonym">Elephant endotheliotropic herpesvirus</name>
    <dbReference type="NCBI Taxonomy" id="654902"/>
    <lineage>
        <taxon>Viruses</taxon>
        <taxon>Duplodnaviria</taxon>
        <taxon>Heunggongvirae</taxon>
        <taxon>Peploviricota</taxon>
        <taxon>Herviviricetes</taxon>
        <taxon>Herpesvirales</taxon>
        <taxon>Orthoherpesviridae</taxon>
        <taxon>Betaherpesvirinae</taxon>
        <taxon>Proboscivirus</taxon>
        <taxon>Proboscivirus elephantidbeta1</taxon>
        <taxon>Elephantid herpesvirus 1</taxon>
    </lineage>
</organism>
<name>U62_ELHVK</name>
<proteinExistence type="predicted"/>
<sequence>MNDLIQSLKSYNVIIKDYAEYIKFLDSSTTGFGFVSTSVSKTKQTEEVCALFDCLGLECILDIKRAAGDLKDGRVPAQHDAVTQPADS</sequence>
<accession>Q18LD6</accession>
<feature type="chain" id="PRO_0000408186" description="Protein U62">
    <location>
        <begin position="1"/>
        <end position="88"/>
    </location>
</feature>
<organismHost>
    <name type="scientific">Elephas maximus</name>
    <name type="common">Indian elephant</name>
    <dbReference type="NCBI Taxonomy" id="9783"/>
</organismHost>
<organismHost>
    <name type="scientific">Loxodonta africana</name>
    <name type="common">African elephant</name>
    <dbReference type="NCBI Taxonomy" id="9785"/>
</organismHost>
<organismHost>
    <name type="scientific">Loxodonta cyclotis</name>
    <name type="common">African forest elephant</name>
    <dbReference type="NCBI Taxonomy" id="99490"/>
</organismHost>
<protein>
    <recommendedName>
        <fullName>Protein U62</fullName>
    </recommendedName>
</protein>